<protein>
    <recommendedName>
        <fullName evidence="1">Serine--tRNA ligase</fullName>
        <ecNumber evidence="1">6.1.1.11</ecNumber>
    </recommendedName>
    <alternativeName>
        <fullName evidence="1">Seryl-tRNA synthetase</fullName>
        <shortName evidence="1">SerRS</shortName>
    </alternativeName>
    <alternativeName>
        <fullName evidence="1">Seryl-tRNA(Ser/Sec) synthetase</fullName>
    </alternativeName>
</protein>
<dbReference type="EC" id="6.1.1.11" evidence="1"/>
<dbReference type="EMBL" id="CU234118">
    <property type="protein sequence ID" value="CAL77796.1"/>
    <property type="molecule type" value="Genomic_DNA"/>
</dbReference>
<dbReference type="RefSeq" id="WP_011926930.1">
    <property type="nucleotide sequence ID" value="NC_009445.1"/>
</dbReference>
<dbReference type="SMR" id="A4YV70"/>
<dbReference type="STRING" id="114615.BRADO4044"/>
<dbReference type="KEGG" id="bra:BRADO4044"/>
<dbReference type="eggNOG" id="COG0172">
    <property type="taxonomic scope" value="Bacteria"/>
</dbReference>
<dbReference type="HOGENOM" id="CLU_023797_1_1_5"/>
<dbReference type="OrthoDB" id="9804647at2"/>
<dbReference type="UniPathway" id="UPA00906">
    <property type="reaction ID" value="UER00895"/>
</dbReference>
<dbReference type="Proteomes" id="UP000001994">
    <property type="component" value="Chromosome"/>
</dbReference>
<dbReference type="GO" id="GO:0005737">
    <property type="term" value="C:cytoplasm"/>
    <property type="evidence" value="ECO:0007669"/>
    <property type="project" value="UniProtKB-SubCell"/>
</dbReference>
<dbReference type="GO" id="GO:0005524">
    <property type="term" value="F:ATP binding"/>
    <property type="evidence" value="ECO:0007669"/>
    <property type="project" value="UniProtKB-UniRule"/>
</dbReference>
<dbReference type="GO" id="GO:0004828">
    <property type="term" value="F:serine-tRNA ligase activity"/>
    <property type="evidence" value="ECO:0007669"/>
    <property type="project" value="UniProtKB-UniRule"/>
</dbReference>
<dbReference type="GO" id="GO:0016260">
    <property type="term" value="P:selenocysteine biosynthetic process"/>
    <property type="evidence" value="ECO:0007669"/>
    <property type="project" value="UniProtKB-UniRule"/>
</dbReference>
<dbReference type="GO" id="GO:0006434">
    <property type="term" value="P:seryl-tRNA aminoacylation"/>
    <property type="evidence" value="ECO:0007669"/>
    <property type="project" value="UniProtKB-UniRule"/>
</dbReference>
<dbReference type="CDD" id="cd00770">
    <property type="entry name" value="SerRS_core"/>
    <property type="match status" value="1"/>
</dbReference>
<dbReference type="Gene3D" id="3.30.930.10">
    <property type="entry name" value="Bira Bifunctional Protein, Domain 2"/>
    <property type="match status" value="1"/>
</dbReference>
<dbReference type="Gene3D" id="1.10.287.40">
    <property type="entry name" value="Serine-tRNA synthetase, tRNA binding domain"/>
    <property type="match status" value="1"/>
</dbReference>
<dbReference type="HAMAP" id="MF_00176">
    <property type="entry name" value="Ser_tRNA_synth_type1"/>
    <property type="match status" value="1"/>
</dbReference>
<dbReference type="InterPro" id="IPR002314">
    <property type="entry name" value="aa-tRNA-synt_IIb"/>
</dbReference>
<dbReference type="InterPro" id="IPR006195">
    <property type="entry name" value="aa-tRNA-synth_II"/>
</dbReference>
<dbReference type="InterPro" id="IPR045864">
    <property type="entry name" value="aa-tRNA-synth_II/BPL/LPL"/>
</dbReference>
<dbReference type="InterPro" id="IPR002317">
    <property type="entry name" value="Ser-tRNA-ligase_type_1"/>
</dbReference>
<dbReference type="InterPro" id="IPR015866">
    <property type="entry name" value="Ser-tRNA-synth_1_N"/>
</dbReference>
<dbReference type="InterPro" id="IPR042103">
    <property type="entry name" value="SerRS_1_N_sf"/>
</dbReference>
<dbReference type="InterPro" id="IPR033729">
    <property type="entry name" value="SerRS_core"/>
</dbReference>
<dbReference type="InterPro" id="IPR010978">
    <property type="entry name" value="tRNA-bd_arm"/>
</dbReference>
<dbReference type="NCBIfam" id="TIGR00414">
    <property type="entry name" value="serS"/>
    <property type="match status" value="1"/>
</dbReference>
<dbReference type="PANTHER" id="PTHR43697:SF1">
    <property type="entry name" value="SERINE--TRNA LIGASE"/>
    <property type="match status" value="1"/>
</dbReference>
<dbReference type="PANTHER" id="PTHR43697">
    <property type="entry name" value="SERYL-TRNA SYNTHETASE"/>
    <property type="match status" value="1"/>
</dbReference>
<dbReference type="Pfam" id="PF02403">
    <property type="entry name" value="Seryl_tRNA_N"/>
    <property type="match status" value="1"/>
</dbReference>
<dbReference type="Pfam" id="PF00587">
    <property type="entry name" value="tRNA-synt_2b"/>
    <property type="match status" value="1"/>
</dbReference>
<dbReference type="PIRSF" id="PIRSF001529">
    <property type="entry name" value="Ser-tRNA-synth_IIa"/>
    <property type="match status" value="1"/>
</dbReference>
<dbReference type="PRINTS" id="PR00981">
    <property type="entry name" value="TRNASYNTHSER"/>
</dbReference>
<dbReference type="SUPFAM" id="SSF55681">
    <property type="entry name" value="Class II aaRS and biotin synthetases"/>
    <property type="match status" value="1"/>
</dbReference>
<dbReference type="SUPFAM" id="SSF46589">
    <property type="entry name" value="tRNA-binding arm"/>
    <property type="match status" value="1"/>
</dbReference>
<dbReference type="PROSITE" id="PS50862">
    <property type="entry name" value="AA_TRNA_LIGASE_II"/>
    <property type="match status" value="1"/>
</dbReference>
<keyword id="KW-0030">Aminoacyl-tRNA synthetase</keyword>
<keyword id="KW-0067">ATP-binding</keyword>
<keyword id="KW-0963">Cytoplasm</keyword>
<keyword id="KW-0436">Ligase</keyword>
<keyword id="KW-0547">Nucleotide-binding</keyword>
<keyword id="KW-0648">Protein biosynthesis</keyword>
<keyword id="KW-1185">Reference proteome</keyword>
<sequence length="442" mass="48730">MHDIKSIRDNPQDFDAALTRRGLSPLSSQLLAIDERRRAAILASEQAQARRNAASREIGEAKKAKDEGRASALMEEVAKLKTTMPELEAAAKQADEELARELSAIPNLPLDEVPDGKDEHDNVERHVFGARRNYAFAPKAHDDIGTALGMDFESAAKLSGARFVVLKKGLARLERAIGQFMLDLHTTEHGYTEVNPPLLVRNDVMFGTGQLPKFEDDQFWAVRGELLIAPDERLKAERLGLIPTAEVALTNLVRESIVDEKELPMRLTALTPCFRAEAGAAGRDTRGMIRQHQFTKVELVSITTPETSKDEHERMLACAEEVLRRLDLHYRVITLCTGDMGFSSQKTYDIEVWMPGQGDGGAFREISSCSVCGDFQARRMDARYRASDGKPRFVHTLNGSGTAVGRALIAVMETYQQADGSIAVPDVLQPYMGGLKVVAADS</sequence>
<gene>
    <name evidence="1" type="primary">serS</name>
    <name type="ordered locus">BRADO4044</name>
</gene>
<evidence type="ECO:0000255" key="1">
    <source>
        <dbReference type="HAMAP-Rule" id="MF_00176"/>
    </source>
</evidence>
<feature type="chain" id="PRO_1000019624" description="Serine--tRNA ligase">
    <location>
        <begin position="1"/>
        <end position="442"/>
    </location>
</feature>
<feature type="binding site" evidence="1">
    <location>
        <begin position="244"/>
        <end position="246"/>
    </location>
    <ligand>
        <name>L-serine</name>
        <dbReference type="ChEBI" id="CHEBI:33384"/>
    </ligand>
</feature>
<feature type="binding site" evidence="1">
    <location>
        <begin position="275"/>
        <end position="277"/>
    </location>
    <ligand>
        <name>ATP</name>
        <dbReference type="ChEBI" id="CHEBI:30616"/>
    </ligand>
</feature>
<feature type="binding site" evidence="1">
    <location>
        <position position="298"/>
    </location>
    <ligand>
        <name>L-serine</name>
        <dbReference type="ChEBI" id="CHEBI:33384"/>
    </ligand>
</feature>
<feature type="binding site" evidence="1">
    <location>
        <begin position="365"/>
        <end position="368"/>
    </location>
    <ligand>
        <name>ATP</name>
        <dbReference type="ChEBI" id="CHEBI:30616"/>
    </ligand>
</feature>
<feature type="binding site" evidence="1">
    <location>
        <position position="400"/>
    </location>
    <ligand>
        <name>L-serine</name>
        <dbReference type="ChEBI" id="CHEBI:33384"/>
    </ligand>
</feature>
<name>SYS_BRASO</name>
<comment type="function">
    <text evidence="1">Catalyzes the attachment of serine to tRNA(Ser). Is also able to aminoacylate tRNA(Sec) with serine, to form the misacylated tRNA L-seryl-tRNA(Sec), which will be further converted into selenocysteinyl-tRNA(Sec).</text>
</comment>
<comment type="catalytic activity">
    <reaction evidence="1">
        <text>tRNA(Ser) + L-serine + ATP = L-seryl-tRNA(Ser) + AMP + diphosphate + H(+)</text>
        <dbReference type="Rhea" id="RHEA:12292"/>
        <dbReference type="Rhea" id="RHEA-COMP:9669"/>
        <dbReference type="Rhea" id="RHEA-COMP:9703"/>
        <dbReference type="ChEBI" id="CHEBI:15378"/>
        <dbReference type="ChEBI" id="CHEBI:30616"/>
        <dbReference type="ChEBI" id="CHEBI:33019"/>
        <dbReference type="ChEBI" id="CHEBI:33384"/>
        <dbReference type="ChEBI" id="CHEBI:78442"/>
        <dbReference type="ChEBI" id="CHEBI:78533"/>
        <dbReference type="ChEBI" id="CHEBI:456215"/>
        <dbReference type="EC" id="6.1.1.11"/>
    </reaction>
</comment>
<comment type="catalytic activity">
    <reaction evidence="1">
        <text>tRNA(Sec) + L-serine + ATP = L-seryl-tRNA(Sec) + AMP + diphosphate + H(+)</text>
        <dbReference type="Rhea" id="RHEA:42580"/>
        <dbReference type="Rhea" id="RHEA-COMP:9742"/>
        <dbReference type="Rhea" id="RHEA-COMP:10128"/>
        <dbReference type="ChEBI" id="CHEBI:15378"/>
        <dbReference type="ChEBI" id="CHEBI:30616"/>
        <dbReference type="ChEBI" id="CHEBI:33019"/>
        <dbReference type="ChEBI" id="CHEBI:33384"/>
        <dbReference type="ChEBI" id="CHEBI:78442"/>
        <dbReference type="ChEBI" id="CHEBI:78533"/>
        <dbReference type="ChEBI" id="CHEBI:456215"/>
        <dbReference type="EC" id="6.1.1.11"/>
    </reaction>
</comment>
<comment type="pathway">
    <text evidence="1">Aminoacyl-tRNA biosynthesis; selenocysteinyl-tRNA(Sec) biosynthesis; L-seryl-tRNA(Sec) from L-serine and tRNA(Sec): step 1/1.</text>
</comment>
<comment type="subunit">
    <text evidence="1">Homodimer. The tRNA molecule binds across the dimer.</text>
</comment>
<comment type="subcellular location">
    <subcellularLocation>
        <location evidence="1">Cytoplasm</location>
    </subcellularLocation>
</comment>
<comment type="domain">
    <text evidence="1">Consists of two distinct domains, a catalytic core and a N-terminal extension that is involved in tRNA binding.</text>
</comment>
<comment type="similarity">
    <text evidence="1">Belongs to the class-II aminoacyl-tRNA synthetase family. Type-1 seryl-tRNA synthetase subfamily.</text>
</comment>
<proteinExistence type="inferred from homology"/>
<reference key="1">
    <citation type="journal article" date="2007" name="Science">
        <title>Legumes symbioses: absence of nod genes in photosynthetic bradyrhizobia.</title>
        <authorList>
            <person name="Giraud E."/>
            <person name="Moulin L."/>
            <person name="Vallenet D."/>
            <person name="Barbe V."/>
            <person name="Cytryn E."/>
            <person name="Avarre J.-C."/>
            <person name="Jaubert M."/>
            <person name="Simon D."/>
            <person name="Cartieaux F."/>
            <person name="Prin Y."/>
            <person name="Bena G."/>
            <person name="Hannibal L."/>
            <person name="Fardoux J."/>
            <person name="Kojadinovic M."/>
            <person name="Vuillet L."/>
            <person name="Lajus A."/>
            <person name="Cruveiller S."/>
            <person name="Rouy Z."/>
            <person name="Mangenot S."/>
            <person name="Segurens B."/>
            <person name="Dossat C."/>
            <person name="Franck W.L."/>
            <person name="Chang W.-S."/>
            <person name="Saunders E."/>
            <person name="Bruce D."/>
            <person name="Richardson P."/>
            <person name="Normand P."/>
            <person name="Dreyfus B."/>
            <person name="Pignol D."/>
            <person name="Stacey G."/>
            <person name="Emerich D."/>
            <person name="Vermeglio A."/>
            <person name="Medigue C."/>
            <person name="Sadowsky M."/>
        </authorList>
    </citation>
    <scope>NUCLEOTIDE SEQUENCE [LARGE SCALE GENOMIC DNA]</scope>
    <source>
        <strain>ORS 278</strain>
    </source>
</reference>
<organism>
    <name type="scientific">Bradyrhizobium sp. (strain ORS 278)</name>
    <dbReference type="NCBI Taxonomy" id="114615"/>
    <lineage>
        <taxon>Bacteria</taxon>
        <taxon>Pseudomonadati</taxon>
        <taxon>Pseudomonadota</taxon>
        <taxon>Alphaproteobacteria</taxon>
        <taxon>Hyphomicrobiales</taxon>
        <taxon>Nitrobacteraceae</taxon>
        <taxon>Bradyrhizobium</taxon>
    </lineage>
</organism>
<accession>A4YV70</accession>